<accession>Q9L9I5</accession>
<evidence type="ECO:0000255" key="1">
    <source>
        <dbReference type="HAMAP-Rule" id="MF_00297"/>
    </source>
</evidence>
<evidence type="ECO:0000305" key="2"/>
<protein>
    <recommendedName>
        <fullName evidence="1">NAD-capped RNA hydrolase NudC</fullName>
        <shortName evidence="1">DeNADding enzyme NudC</shortName>
        <ecNumber evidence="1">3.6.1.-</ecNumber>
    </recommendedName>
    <alternativeName>
        <fullName evidence="1">NADH pyrophosphatase</fullName>
        <ecNumber evidence="1">3.6.1.22</ecNumber>
    </alternativeName>
</protein>
<keyword id="KW-0378">Hydrolase</keyword>
<keyword id="KW-0460">Magnesium</keyword>
<keyword id="KW-0464">Manganese</keyword>
<keyword id="KW-0479">Metal-binding</keyword>
<keyword id="KW-0520">NAD</keyword>
<keyword id="KW-1185">Reference proteome</keyword>
<keyword id="KW-0862">Zinc</keyword>
<dbReference type="EC" id="3.6.1.-" evidence="1"/>
<dbReference type="EC" id="3.6.1.22" evidence="1"/>
<dbReference type="EMBL" id="AF170176">
    <property type="protein sequence ID" value="AAF33500.1"/>
    <property type="molecule type" value="Genomic_DNA"/>
</dbReference>
<dbReference type="EMBL" id="AE006468">
    <property type="protein sequence ID" value="AAL22994.1"/>
    <property type="molecule type" value="Genomic_DNA"/>
</dbReference>
<dbReference type="RefSeq" id="WP_000373966.1">
    <property type="nucleotide sequence ID" value="NC_003197.2"/>
</dbReference>
<dbReference type="SMR" id="Q9L9I5"/>
<dbReference type="STRING" id="99287.STM4166"/>
<dbReference type="PaxDb" id="99287-STM4166"/>
<dbReference type="KEGG" id="stm:STM4166"/>
<dbReference type="PATRIC" id="fig|99287.12.peg.4380"/>
<dbReference type="HOGENOM" id="CLU_037162_0_1_6"/>
<dbReference type="OMA" id="TWAREHR"/>
<dbReference type="PhylomeDB" id="Q9L9I5"/>
<dbReference type="BioCyc" id="SENT99287:STM4166-MONOMER"/>
<dbReference type="Proteomes" id="UP000001014">
    <property type="component" value="Chromosome"/>
</dbReference>
<dbReference type="GO" id="GO:0000287">
    <property type="term" value="F:magnesium ion binding"/>
    <property type="evidence" value="ECO:0007669"/>
    <property type="project" value="UniProtKB-UniRule"/>
</dbReference>
<dbReference type="GO" id="GO:0030145">
    <property type="term" value="F:manganese ion binding"/>
    <property type="evidence" value="ECO:0007669"/>
    <property type="project" value="UniProtKB-UniRule"/>
</dbReference>
<dbReference type="GO" id="GO:0000210">
    <property type="term" value="F:NAD+ diphosphatase activity"/>
    <property type="evidence" value="ECO:0007669"/>
    <property type="project" value="UniProtKB-UniRule"/>
</dbReference>
<dbReference type="GO" id="GO:0035529">
    <property type="term" value="F:NADH pyrophosphatase activity"/>
    <property type="evidence" value="ECO:0000318"/>
    <property type="project" value="GO_Central"/>
</dbReference>
<dbReference type="GO" id="GO:0110153">
    <property type="term" value="F:RNA NAD-cap (NMN-forming) hydrolase activity"/>
    <property type="evidence" value="ECO:0007669"/>
    <property type="project" value="RHEA"/>
</dbReference>
<dbReference type="GO" id="GO:0008270">
    <property type="term" value="F:zinc ion binding"/>
    <property type="evidence" value="ECO:0007669"/>
    <property type="project" value="UniProtKB-UniRule"/>
</dbReference>
<dbReference type="GO" id="GO:0019677">
    <property type="term" value="P:NAD catabolic process"/>
    <property type="evidence" value="ECO:0000318"/>
    <property type="project" value="GO_Central"/>
</dbReference>
<dbReference type="GO" id="GO:0006734">
    <property type="term" value="P:NADH metabolic process"/>
    <property type="evidence" value="ECO:0000318"/>
    <property type="project" value="GO_Central"/>
</dbReference>
<dbReference type="GO" id="GO:0006742">
    <property type="term" value="P:NADP catabolic process"/>
    <property type="evidence" value="ECO:0000318"/>
    <property type="project" value="GO_Central"/>
</dbReference>
<dbReference type="CDD" id="cd03429">
    <property type="entry name" value="NUDIX_NADH_pyrophosphatase_Nudt13"/>
    <property type="match status" value="1"/>
</dbReference>
<dbReference type="FunFam" id="3.90.79.10:FF:000004">
    <property type="entry name" value="NADH pyrophosphatase"/>
    <property type="match status" value="1"/>
</dbReference>
<dbReference type="FunFam" id="3.90.79.20:FF:000001">
    <property type="entry name" value="NADH pyrophosphatase"/>
    <property type="match status" value="1"/>
</dbReference>
<dbReference type="Gene3D" id="3.90.79.20">
    <property type="match status" value="1"/>
</dbReference>
<dbReference type="Gene3D" id="3.90.79.10">
    <property type="entry name" value="Nucleoside Triphosphate Pyrophosphohydrolase"/>
    <property type="match status" value="1"/>
</dbReference>
<dbReference type="HAMAP" id="MF_00297">
    <property type="entry name" value="Nudix_NudC"/>
    <property type="match status" value="1"/>
</dbReference>
<dbReference type="InterPro" id="IPR050241">
    <property type="entry name" value="NAD-cap_RNA_hydrolase_NudC"/>
</dbReference>
<dbReference type="InterPro" id="IPR049734">
    <property type="entry name" value="NudC-like_C"/>
</dbReference>
<dbReference type="InterPro" id="IPR015797">
    <property type="entry name" value="NUDIX_hydrolase-like_dom_sf"/>
</dbReference>
<dbReference type="InterPro" id="IPR020084">
    <property type="entry name" value="NUDIX_hydrolase_CS"/>
</dbReference>
<dbReference type="InterPro" id="IPR000086">
    <property type="entry name" value="NUDIX_hydrolase_dom"/>
</dbReference>
<dbReference type="InterPro" id="IPR022925">
    <property type="entry name" value="RNA_Hydrolase_NudC"/>
</dbReference>
<dbReference type="InterPro" id="IPR015376">
    <property type="entry name" value="Znr_NADH_PPase"/>
</dbReference>
<dbReference type="NCBIfam" id="NF001299">
    <property type="entry name" value="PRK00241.1"/>
    <property type="match status" value="1"/>
</dbReference>
<dbReference type="PANTHER" id="PTHR42904:SF6">
    <property type="entry name" value="NAD-CAPPED RNA HYDROLASE NUDT12"/>
    <property type="match status" value="1"/>
</dbReference>
<dbReference type="PANTHER" id="PTHR42904">
    <property type="entry name" value="NUDIX HYDROLASE, NUDC SUBFAMILY"/>
    <property type="match status" value="1"/>
</dbReference>
<dbReference type="Pfam" id="PF00293">
    <property type="entry name" value="NUDIX"/>
    <property type="match status" value="1"/>
</dbReference>
<dbReference type="Pfam" id="PF09297">
    <property type="entry name" value="Zn_ribbon_NUD"/>
    <property type="match status" value="1"/>
</dbReference>
<dbReference type="SUPFAM" id="SSF55811">
    <property type="entry name" value="Nudix"/>
    <property type="match status" value="2"/>
</dbReference>
<dbReference type="PROSITE" id="PS51462">
    <property type="entry name" value="NUDIX"/>
    <property type="match status" value="1"/>
</dbReference>
<dbReference type="PROSITE" id="PS00893">
    <property type="entry name" value="NUDIX_BOX"/>
    <property type="match status" value="1"/>
</dbReference>
<name>NUDC_SALTY</name>
<sequence>MDRIIEKLESGWWIVSHEQKLWLPYGELPHGLAANFDLVGQRALRIGEWQGEPVWLVLQHRRHDMGSVRQVIDQEAGLFQLAGRGVQLAEFYRSHKFCGYCGHPMHPSKTEWAMLCSHCRERYYPQIAPCIIVAIRREDSILLAQHVRHRNGVHTVLAGFVEVGETLEQAVAREVMEESGIKVKNLRYVTSQPWPFPQSLMTAFMAEYDSGEIVIDPKELLEANWYRYDDLPLLPPPGTVARRLIEDTVAMCRAEYD</sequence>
<organism>
    <name type="scientific">Salmonella typhimurium (strain LT2 / SGSC1412 / ATCC 700720)</name>
    <dbReference type="NCBI Taxonomy" id="99287"/>
    <lineage>
        <taxon>Bacteria</taxon>
        <taxon>Pseudomonadati</taxon>
        <taxon>Pseudomonadota</taxon>
        <taxon>Gammaproteobacteria</taxon>
        <taxon>Enterobacterales</taxon>
        <taxon>Enterobacteriaceae</taxon>
        <taxon>Salmonella</taxon>
    </lineage>
</organism>
<reference key="1">
    <citation type="journal article" date="2001" name="Nature">
        <title>Complete genome sequence of Salmonella enterica serovar Typhimurium LT2.</title>
        <authorList>
            <person name="McClelland M."/>
            <person name="Sanderson K.E."/>
            <person name="Spieth J."/>
            <person name="Clifton S.W."/>
            <person name="Latreille P."/>
            <person name="Courtney L."/>
            <person name="Porwollik S."/>
            <person name="Ali J."/>
            <person name="Dante M."/>
            <person name="Du F."/>
            <person name="Hou S."/>
            <person name="Layman D."/>
            <person name="Leonard S."/>
            <person name="Nguyen C."/>
            <person name="Scott K."/>
            <person name="Holmes A."/>
            <person name="Grewal N."/>
            <person name="Mulvaney E."/>
            <person name="Ryan E."/>
            <person name="Sun H."/>
            <person name="Florea L."/>
            <person name="Miller W."/>
            <person name="Stoneking T."/>
            <person name="Nhan M."/>
            <person name="Waterston R."/>
            <person name="Wilson R.K."/>
        </authorList>
    </citation>
    <scope>NUCLEOTIDE SEQUENCE [LARGE SCALE GENOMIC DNA]</scope>
    <source>
        <strain>LT2 / SGSC1412 / ATCC 700720</strain>
    </source>
</reference>
<feature type="chain" id="PRO_0000056976" description="NAD-capped RNA hydrolase NudC">
    <location>
        <begin position="1"/>
        <end position="257"/>
    </location>
</feature>
<feature type="domain" description="Nudix hydrolase" evidence="1">
    <location>
        <begin position="125"/>
        <end position="248"/>
    </location>
</feature>
<feature type="short sequence motif" description="Nudix box" evidence="1">
    <location>
        <begin position="159"/>
        <end position="180"/>
    </location>
</feature>
<feature type="binding site" evidence="1">
    <location>
        <position position="69"/>
    </location>
    <ligand>
        <name>substrate</name>
    </ligand>
</feature>
<feature type="binding site" evidence="1">
    <location>
        <position position="98"/>
    </location>
    <ligand>
        <name>Zn(2+)</name>
        <dbReference type="ChEBI" id="CHEBI:29105"/>
    </ligand>
</feature>
<feature type="binding site" evidence="1">
    <location>
        <position position="101"/>
    </location>
    <ligand>
        <name>Zn(2+)</name>
        <dbReference type="ChEBI" id="CHEBI:29105"/>
    </ligand>
</feature>
<feature type="binding site" evidence="1">
    <location>
        <position position="111"/>
    </location>
    <ligand>
        <name>substrate</name>
    </ligand>
</feature>
<feature type="binding site" evidence="1">
    <location>
        <position position="116"/>
    </location>
    <ligand>
        <name>Zn(2+)</name>
        <dbReference type="ChEBI" id="CHEBI:29105"/>
    </ligand>
</feature>
<feature type="binding site" evidence="1">
    <location>
        <position position="119"/>
    </location>
    <ligand>
        <name>Zn(2+)</name>
        <dbReference type="ChEBI" id="CHEBI:29105"/>
    </ligand>
</feature>
<feature type="binding site" evidence="1">
    <location>
        <position position="124"/>
    </location>
    <ligand>
        <name>substrate</name>
    </ligand>
</feature>
<feature type="binding site" evidence="1">
    <location>
        <position position="158"/>
    </location>
    <ligand>
        <name>a divalent metal cation</name>
        <dbReference type="ChEBI" id="CHEBI:60240"/>
        <label>1</label>
    </ligand>
</feature>
<feature type="binding site" evidence="1">
    <location>
        <position position="174"/>
    </location>
    <ligand>
        <name>a divalent metal cation</name>
        <dbReference type="ChEBI" id="CHEBI:60240"/>
        <label>2</label>
    </ligand>
</feature>
<feature type="binding site" evidence="1">
    <location>
        <position position="174"/>
    </location>
    <ligand>
        <name>a divalent metal cation</name>
        <dbReference type="ChEBI" id="CHEBI:60240"/>
        <label>3</label>
    </ligand>
</feature>
<feature type="binding site" evidence="1">
    <location>
        <position position="178"/>
    </location>
    <ligand>
        <name>a divalent metal cation</name>
        <dbReference type="ChEBI" id="CHEBI:60240"/>
        <label>1</label>
    </ligand>
</feature>
<feature type="binding site" evidence="1">
    <location>
        <position position="178"/>
    </location>
    <ligand>
        <name>a divalent metal cation</name>
        <dbReference type="ChEBI" id="CHEBI:60240"/>
        <label>3</label>
    </ligand>
</feature>
<feature type="binding site" evidence="1">
    <location>
        <begin position="192"/>
        <end position="199"/>
    </location>
    <ligand>
        <name>substrate</name>
    </ligand>
</feature>
<feature type="binding site" evidence="1">
    <location>
        <position position="219"/>
    </location>
    <ligand>
        <name>a divalent metal cation</name>
        <dbReference type="ChEBI" id="CHEBI:60240"/>
        <label>1</label>
    </ligand>
</feature>
<feature type="binding site" evidence="1">
    <location>
        <position position="219"/>
    </location>
    <ligand>
        <name>a divalent metal cation</name>
        <dbReference type="ChEBI" id="CHEBI:60240"/>
        <label>3</label>
    </ligand>
</feature>
<feature type="binding site" evidence="1">
    <location>
        <position position="241"/>
    </location>
    <ligand>
        <name>substrate</name>
    </ligand>
</feature>
<proteinExistence type="inferred from homology"/>
<comment type="function">
    <text evidence="1">mRNA decapping enzyme that specifically removes the nicotinamide adenine dinucleotide (NAD) cap from a subset of mRNAs by hydrolyzing the diphosphate linkage to produce nicotinamide mononucleotide (NMN) and 5' monophosphate mRNA. The NAD-cap is present at the 5'-end of some mRNAs and stabilizes RNA against 5'-processing. Has preference for mRNAs with a 5'-end purine. Catalyzes the hydrolysis of a broad range of dinucleotide pyrophosphates.</text>
</comment>
<comment type="catalytic activity">
    <reaction evidence="1">
        <text>a 5'-end NAD(+)-phospho-ribonucleoside in mRNA + H2O = a 5'-end phospho-adenosine-phospho-ribonucleoside in mRNA + beta-nicotinamide D-ribonucleotide + 2 H(+)</text>
        <dbReference type="Rhea" id="RHEA:60876"/>
        <dbReference type="Rhea" id="RHEA-COMP:15698"/>
        <dbReference type="Rhea" id="RHEA-COMP:15719"/>
        <dbReference type="ChEBI" id="CHEBI:14649"/>
        <dbReference type="ChEBI" id="CHEBI:15377"/>
        <dbReference type="ChEBI" id="CHEBI:15378"/>
        <dbReference type="ChEBI" id="CHEBI:144029"/>
        <dbReference type="ChEBI" id="CHEBI:144051"/>
    </reaction>
    <physiologicalReaction direction="left-to-right" evidence="1">
        <dbReference type="Rhea" id="RHEA:60877"/>
    </physiologicalReaction>
</comment>
<comment type="catalytic activity">
    <reaction evidence="1">
        <text>NAD(+) + H2O = beta-nicotinamide D-ribonucleotide + AMP + 2 H(+)</text>
        <dbReference type="Rhea" id="RHEA:11800"/>
        <dbReference type="ChEBI" id="CHEBI:14649"/>
        <dbReference type="ChEBI" id="CHEBI:15377"/>
        <dbReference type="ChEBI" id="CHEBI:15378"/>
        <dbReference type="ChEBI" id="CHEBI:57540"/>
        <dbReference type="ChEBI" id="CHEBI:456215"/>
        <dbReference type="EC" id="3.6.1.22"/>
    </reaction>
</comment>
<comment type="catalytic activity">
    <reaction evidence="1">
        <text>NADH + H2O = reduced beta-nicotinamide D-ribonucleotide + AMP + 2 H(+)</text>
        <dbReference type="Rhea" id="RHEA:48868"/>
        <dbReference type="ChEBI" id="CHEBI:15377"/>
        <dbReference type="ChEBI" id="CHEBI:15378"/>
        <dbReference type="ChEBI" id="CHEBI:57945"/>
        <dbReference type="ChEBI" id="CHEBI:90832"/>
        <dbReference type="ChEBI" id="CHEBI:456215"/>
        <dbReference type="EC" id="3.6.1.22"/>
    </reaction>
</comment>
<comment type="cofactor">
    <cofactor evidence="1">
        <name>Mg(2+)</name>
        <dbReference type="ChEBI" id="CHEBI:18420"/>
    </cofactor>
    <cofactor evidence="1">
        <name>Mn(2+)</name>
        <dbReference type="ChEBI" id="CHEBI:29035"/>
    </cofactor>
    <text evidence="1">Divalent metal cations. Mg(2+) or Mn(2+).</text>
</comment>
<comment type="cofactor">
    <cofactor evidence="1">
        <name>Zn(2+)</name>
        <dbReference type="ChEBI" id="CHEBI:29105"/>
    </cofactor>
    <text evidence="1">Binds 1 zinc ion per subunit.</text>
</comment>
<comment type="subunit">
    <text evidence="1">Homodimer.</text>
</comment>
<comment type="similarity">
    <text evidence="1 2">Belongs to the Nudix hydrolase family. NudC subfamily.</text>
</comment>
<gene>
    <name evidence="1" type="primary">nudC</name>
    <name type="ordered locus">STM4166</name>
    <name type="ORF">STMF1.20</name>
</gene>